<gene>
    <name type="primary">TSNAX</name>
    <name type="synonym">TRAX</name>
</gene>
<protein>
    <recommendedName>
        <fullName>Translin-associated protein X</fullName>
    </recommendedName>
    <alternativeName>
        <fullName>Translin-associated factor X</fullName>
    </alternativeName>
</protein>
<dbReference type="EMBL" id="CR858461">
    <property type="protein sequence ID" value="CAH90689.1"/>
    <property type="molecule type" value="mRNA"/>
</dbReference>
<dbReference type="RefSeq" id="NP_001125379.1">
    <property type="nucleotide sequence ID" value="NM_001131907.2"/>
</dbReference>
<dbReference type="SMR" id="Q5RC21"/>
<dbReference type="FunCoup" id="Q5RC21">
    <property type="interactions" value="3748"/>
</dbReference>
<dbReference type="STRING" id="9601.ENSPPYP00000000113"/>
<dbReference type="Ensembl" id="ENSPPYT00000000122.2">
    <property type="protein sequence ID" value="ENSPPYP00000000113.1"/>
    <property type="gene ID" value="ENSPPYG00000000112.2"/>
</dbReference>
<dbReference type="GeneID" id="100172282"/>
<dbReference type="KEGG" id="pon:100172282"/>
<dbReference type="CTD" id="7257"/>
<dbReference type="eggNOG" id="KOG3066">
    <property type="taxonomic scope" value="Eukaryota"/>
</dbReference>
<dbReference type="GeneTree" id="ENSGT00940000153568"/>
<dbReference type="HOGENOM" id="CLU_067225_1_0_1"/>
<dbReference type="InParanoid" id="Q5RC21"/>
<dbReference type="OMA" id="DTCMETC"/>
<dbReference type="OrthoDB" id="31005at2759"/>
<dbReference type="TreeFam" id="TF323633"/>
<dbReference type="Proteomes" id="UP000001595">
    <property type="component" value="Chromosome 1"/>
</dbReference>
<dbReference type="GO" id="GO:1902555">
    <property type="term" value="C:endoribonuclease complex"/>
    <property type="evidence" value="ECO:0007669"/>
    <property type="project" value="Ensembl"/>
</dbReference>
<dbReference type="GO" id="GO:0005794">
    <property type="term" value="C:Golgi apparatus"/>
    <property type="evidence" value="ECO:0007669"/>
    <property type="project" value="UniProtKB-SubCell"/>
</dbReference>
<dbReference type="GO" id="GO:0005654">
    <property type="term" value="C:nucleoplasm"/>
    <property type="evidence" value="ECO:0007669"/>
    <property type="project" value="Ensembl"/>
</dbReference>
<dbReference type="GO" id="GO:0048471">
    <property type="term" value="C:perinuclear region of cytoplasm"/>
    <property type="evidence" value="ECO:0007669"/>
    <property type="project" value="UniProtKB-SubCell"/>
</dbReference>
<dbReference type="GO" id="GO:0046872">
    <property type="term" value="F:metal ion binding"/>
    <property type="evidence" value="ECO:0007669"/>
    <property type="project" value="UniProtKB-KW"/>
</dbReference>
<dbReference type="GO" id="GO:0043565">
    <property type="term" value="F:sequence-specific DNA binding"/>
    <property type="evidence" value="ECO:0007669"/>
    <property type="project" value="InterPro"/>
</dbReference>
<dbReference type="GO" id="GO:0030154">
    <property type="term" value="P:cell differentiation"/>
    <property type="evidence" value="ECO:0007669"/>
    <property type="project" value="UniProtKB-KW"/>
</dbReference>
<dbReference type="GO" id="GO:0030422">
    <property type="term" value="P:siRNA processing"/>
    <property type="evidence" value="ECO:0007669"/>
    <property type="project" value="Ensembl"/>
</dbReference>
<dbReference type="GO" id="GO:0007283">
    <property type="term" value="P:spermatogenesis"/>
    <property type="evidence" value="ECO:0007669"/>
    <property type="project" value="UniProtKB-KW"/>
</dbReference>
<dbReference type="CDD" id="cd14805">
    <property type="entry name" value="Translin-like"/>
    <property type="match status" value="1"/>
</dbReference>
<dbReference type="FunFam" id="1.20.58.190:FF:000002">
    <property type="entry name" value="Translin-associated factor X"/>
    <property type="match status" value="1"/>
</dbReference>
<dbReference type="FunFam" id="1.20.58.200:FF:000001">
    <property type="entry name" value="Translin-associated factor X"/>
    <property type="match status" value="1"/>
</dbReference>
<dbReference type="Gene3D" id="1.20.58.190">
    <property type="entry name" value="Translin, domain 1"/>
    <property type="match status" value="1"/>
</dbReference>
<dbReference type="Gene3D" id="1.20.58.200">
    <property type="entry name" value="Translin, domain 2"/>
    <property type="match status" value="1"/>
</dbReference>
<dbReference type="InterPro" id="IPR016069">
    <property type="entry name" value="Translin_C"/>
</dbReference>
<dbReference type="InterPro" id="IPR002848">
    <property type="entry name" value="Translin_fam"/>
</dbReference>
<dbReference type="InterPro" id="IPR016068">
    <property type="entry name" value="Translin_N"/>
</dbReference>
<dbReference type="InterPro" id="IPR036081">
    <property type="entry name" value="Translin_sf"/>
</dbReference>
<dbReference type="PANTHER" id="PTHR10741">
    <property type="entry name" value="TRANSLIN AND TRANSLIN ASSOCIATED PROTEIN X"/>
    <property type="match status" value="1"/>
</dbReference>
<dbReference type="Pfam" id="PF01997">
    <property type="entry name" value="Translin"/>
    <property type="match status" value="1"/>
</dbReference>
<dbReference type="SUPFAM" id="SSF74784">
    <property type="entry name" value="Translin"/>
    <property type="match status" value="1"/>
</dbReference>
<name>TSNAX_PONAB</name>
<feature type="chain" id="PRO_0000191688" description="Translin-associated protein X">
    <location>
        <begin position="1"/>
        <end position="290"/>
    </location>
</feature>
<feature type="region of interest" description="Disordered" evidence="3">
    <location>
        <begin position="1"/>
        <end position="32"/>
    </location>
</feature>
<feature type="region of interest" description="Interaction with C1D" evidence="1">
    <location>
        <begin position="73"/>
        <end position="208"/>
    </location>
</feature>
<feature type="compositionally biased region" description="Basic and acidic residues" evidence="3">
    <location>
        <begin position="16"/>
        <end position="28"/>
    </location>
</feature>
<feature type="binding site" evidence="1">
    <location>
        <position position="129"/>
    </location>
    <ligand>
        <name>Mg(2+)</name>
        <dbReference type="ChEBI" id="CHEBI:18420"/>
    </ligand>
</feature>
<feature type="binding site" evidence="1">
    <location>
        <position position="197"/>
    </location>
    <ligand>
        <name>Mg(2+)</name>
        <dbReference type="ChEBI" id="CHEBI:18420"/>
    </ligand>
</feature>
<feature type="cross-link" description="Glycyl lysine isopeptide (Lys-Gly) (interchain with G-Cter in SUMO2)" evidence="2">
    <location>
        <position position="279"/>
    </location>
</feature>
<organism>
    <name type="scientific">Pongo abelii</name>
    <name type="common">Sumatran orangutan</name>
    <name type="synonym">Pongo pygmaeus abelii</name>
    <dbReference type="NCBI Taxonomy" id="9601"/>
    <lineage>
        <taxon>Eukaryota</taxon>
        <taxon>Metazoa</taxon>
        <taxon>Chordata</taxon>
        <taxon>Craniata</taxon>
        <taxon>Vertebrata</taxon>
        <taxon>Euteleostomi</taxon>
        <taxon>Mammalia</taxon>
        <taxon>Eutheria</taxon>
        <taxon>Euarchontoglires</taxon>
        <taxon>Primates</taxon>
        <taxon>Haplorrhini</taxon>
        <taxon>Catarrhini</taxon>
        <taxon>Hominidae</taxon>
        <taxon>Pongo</taxon>
    </lineage>
</organism>
<proteinExistence type="evidence at transcript level"/>
<evidence type="ECO:0000250" key="1"/>
<evidence type="ECO:0000250" key="2">
    <source>
        <dbReference type="UniProtKB" id="Q99598"/>
    </source>
</evidence>
<evidence type="ECO:0000256" key="3">
    <source>
        <dbReference type="SAM" id="MobiDB-lite"/>
    </source>
</evidence>
<evidence type="ECO:0000305" key="4"/>
<accession>Q5RC21</accession>
<keyword id="KW-0963">Cytoplasm</keyword>
<keyword id="KW-0217">Developmental protein</keyword>
<keyword id="KW-0221">Differentiation</keyword>
<keyword id="KW-0238">DNA-binding</keyword>
<keyword id="KW-0333">Golgi apparatus</keyword>
<keyword id="KW-1017">Isopeptide bond</keyword>
<keyword id="KW-0460">Magnesium</keyword>
<keyword id="KW-0479">Metal-binding</keyword>
<keyword id="KW-0539">Nucleus</keyword>
<keyword id="KW-1185">Reference proteome</keyword>
<keyword id="KW-0744">Spermatogenesis</keyword>
<keyword id="KW-0832">Ubl conjugation</keyword>
<comment type="function">
    <text evidence="1">Acts in combination with TSN as an endonuclease involved in the activation of the RNA-induced silencing complex (RISC). Possible role in spermatogenesis (By similarity).</text>
</comment>
<comment type="subunit">
    <text evidence="1">Ring-shaped heterooctamer of six TSN and two TSNAX subunits. Interacts with GOLGA3, TSNAXIP1, SUN1 and AKAP9. Interacts with the homodimeric form of C1D following gamma-radiation. Interacts with TSN and C1D in a mutually exclusive manner (By similarity).</text>
</comment>
<comment type="subcellular location">
    <subcellularLocation>
        <location evidence="1">Cytoplasm</location>
        <location evidence="1">Perinuclear region</location>
    </subcellularLocation>
    <subcellularLocation>
        <location>Golgi apparatus</location>
    </subcellularLocation>
    <subcellularLocation>
        <location evidence="1">Nucleus</location>
    </subcellularLocation>
    <text evidence="1">Expressed in the cytoplasm in the presence of TSN. Accumulate in the Golgi complex of mid-late pachytene spermatocytes (By similarity).</text>
</comment>
<comment type="PTM">
    <text evidence="1">Sumoylated with SUMO1.</text>
</comment>
<comment type="similarity">
    <text evidence="4">Belongs to the translin family.</text>
</comment>
<sequence>MSNKEGSGGFRKRKHDNFPHNQRREGKDVNSSSPVMLAFKSFQQELDARHDKYERLVKLSRDITVESKRTIFLLHRITSAPDMEDILTESEIKLDGVRQKIFQVAQELSGEDMHQFHRAITTGLQEYVEAVSFQHFIKTRSLISMDEINKQLIFTTEDNGKENKTPSSDAQDKQFGTWRLRVTPVDYLLGVADLTGELMRMCINSVGNGDIDTPFEVSQFLRQVYDGFSFIGNTGPYEVSKKLYTLKQSLAKVENACYALKVRGSEIPKHMLADVFSVKTEMIDQEEGIS</sequence>
<reference key="1">
    <citation type="submission" date="2004-11" db="EMBL/GenBank/DDBJ databases">
        <authorList>
            <consortium name="The German cDNA consortium"/>
        </authorList>
    </citation>
    <scope>NUCLEOTIDE SEQUENCE [LARGE SCALE MRNA]</scope>
    <source>
        <tissue>Heart</tissue>
    </source>
</reference>